<sequence>MRDELNQGLIDYLKASPTPFHATASLAQTLQAAGYKALDEREPWHTEAGGRYYVTRNDSAIIAFQLGGKPLAEHGLRLVGAHTDSPCLRVKPQPELQRQGFWQLGVEVYGGALLAPWFDRDLSLAGRVTYSRDGRIESQLIDFRQPIACIPNLAIHLNREANQGWAINAQNELPPILAQIASQESPDFRALLADQLGREHGLVADVVLDFELSFYDTQPAAVIGLNGDFIAGARLDNLLSCFAGLQALFDAGPDETCVLVCTDHEEVGSASMCGADGPFLEQVLRRLLPEEDDFQRAINRSLLISADNAHAVHPNYADKHDGNHGPKLNAGPVIKVNSNQRYATSSETAGFFRHLCLENEVPVQSFVTRSDMGCGSTIGPITASQLGVRTVDIGLPTFAMHSIRELAGSQDLAHLVKVLGAFYSSAELP</sequence>
<evidence type="ECO:0000255" key="1">
    <source>
        <dbReference type="HAMAP-Rule" id="MF_00467"/>
    </source>
</evidence>
<gene>
    <name evidence="1" type="primary">apeB</name>
    <name type="ordered locus">PST_1421</name>
</gene>
<reference key="1">
    <citation type="journal article" date="2008" name="Proc. Natl. Acad. Sci. U.S.A.">
        <title>Nitrogen fixation island and rhizosphere competence traits in the genome of root-associated Pseudomonas stutzeri A1501.</title>
        <authorList>
            <person name="Yan Y."/>
            <person name="Yang J."/>
            <person name="Dou Y."/>
            <person name="Chen M."/>
            <person name="Ping S."/>
            <person name="Peng J."/>
            <person name="Lu W."/>
            <person name="Zhang W."/>
            <person name="Yao Z."/>
            <person name="Li H."/>
            <person name="Liu W."/>
            <person name="He S."/>
            <person name="Geng L."/>
            <person name="Zhang X."/>
            <person name="Yang F."/>
            <person name="Yu H."/>
            <person name="Zhan Y."/>
            <person name="Li D."/>
            <person name="Lin Z."/>
            <person name="Wang Y."/>
            <person name="Elmerich C."/>
            <person name="Lin M."/>
            <person name="Jin Q."/>
        </authorList>
    </citation>
    <scope>NUCLEOTIDE SEQUENCE [LARGE SCALE GENOMIC DNA]</scope>
    <source>
        <strain>A1501</strain>
    </source>
</reference>
<comment type="cofactor">
    <cofactor evidence="1">
        <name>Zn(2+)</name>
        <dbReference type="ChEBI" id="CHEBI:29105"/>
    </cofactor>
</comment>
<comment type="similarity">
    <text evidence="1">Belongs to the peptidase M18 family.</text>
</comment>
<protein>
    <recommendedName>
        <fullName evidence="1">Probable M18 family aminopeptidase 2</fullName>
        <ecNumber evidence="1">3.4.11.-</ecNumber>
    </recommendedName>
</protein>
<accession>A4VJG1</accession>
<proteinExistence type="inferred from homology"/>
<dbReference type="EC" id="3.4.11.-" evidence="1"/>
<dbReference type="EMBL" id="CP000304">
    <property type="protein sequence ID" value="ABP79112.1"/>
    <property type="molecule type" value="Genomic_DNA"/>
</dbReference>
<dbReference type="RefSeq" id="WP_011912593.1">
    <property type="nucleotide sequence ID" value="NC_009434.1"/>
</dbReference>
<dbReference type="SMR" id="A4VJG1"/>
<dbReference type="MEROPS" id="M18.002"/>
<dbReference type="KEGG" id="psa:PST_1421"/>
<dbReference type="eggNOG" id="COG1362">
    <property type="taxonomic scope" value="Bacteria"/>
</dbReference>
<dbReference type="HOGENOM" id="CLU_019532_2_0_6"/>
<dbReference type="Proteomes" id="UP000000233">
    <property type="component" value="Chromosome"/>
</dbReference>
<dbReference type="GO" id="GO:0005737">
    <property type="term" value="C:cytoplasm"/>
    <property type="evidence" value="ECO:0007669"/>
    <property type="project" value="UniProtKB-ARBA"/>
</dbReference>
<dbReference type="GO" id="GO:0004177">
    <property type="term" value="F:aminopeptidase activity"/>
    <property type="evidence" value="ECO:0007669"/>
    <property type="project" value="UniProtKB-UniRule"/>
</dbReference>
<dbReference type="GO" id="GO:0008237">
    <property type="term" value="F:metallopeptidase activity"/>
    <property type="evidence" value="ECO:0007669"/>
    <property type="project" value="UniProtKB-UniRule"/>
</dbReference>
<dbReference type="GO" id="GO:0008270">
    <property type="term" value="F:zinc ion binding"/>
    <property type="evidence" value="ECO:0007669"/>
    <property type="project" value="UniProtKB-UniRule"/>
</dbReference>
<dbReference type="GO" id="GO:0006508">
    <property type="term" value="P:proteolysis"/>
    <property type="evidence" value="ECO:0007669"/>
    <property type="project" value="UniProtKB-UniRule"/>
</dbReference>
<dbReference type="CDD" id="cd05658">
    <property type="entry name" value="M18_DAP"/>
    <property type="match status" value="1"/>
</dbReference>
<dbReference type="FunFam" id="2.30.250.10:FF:000003">
    <property type="entry name" value="Probable M18 family aminopeptidase 2"/>
    <property type="match status" value="1"/>
</dbReference>
<dbReference type="Gene3D" id="2.30.250.10">
    <property type="entry name" value="Aminopeptidase i, Domain 2"/>
    <property type="match status" value="1"/>
</dbReference>
<dbReference type="Gene3D" id="3.40.630.10">
    <property type="entry name" value="Zn peptidases"/>
    <property type="match status" value="1"/>
</dbReference>
<dbReference type="HAMAP" id="MF_00467">
    <property type="entry name" value="Aminopeptidase_M18_2"/>
    <property type="match status" value="1"/>
</dbReference>
<dbReference type="InterPro" id="IPR022984">
    <property type="entry name" value="M18_aminopeptidase_2"/>
</dbReference>
<dbReference type="InterPro" id="IPR001948">
    <property type="entry name" value="Peptidase_M18"/>
</dbReference>
<dbReference type="InterPro" id="IPR023358">
    <property type="entry name" value="Peptidase_M18_dom2"/>
</dbReference>
<dbReference type="NCBIfam" id="NF002759">
    <property type="entry name" value="PRK02813.1"/>
    <property type="match status" value="1"/>
</dbReference>
<dbReference type="PANTHER" id="PTHR28570">
    <property type="entry name" value="ASPARTYL AMINOPEPTIDASE"/>
    <property type="match status" value="1"/>
</dbReference>
<dbReference type="PANTHER" id="PTHR28570:SF3">
    <property type="entry name" value="ASPARTYL AMINOPEPTIDASE"/>
    <property type="match status" value="1"/>
</dbReference>
<dbReference type="Pfam" id="PF02127">
    <property type="entry name" value="Peptidase_M18"/>
    <property type="match status" value="1"/>
</dbReference>
<dbReference type="PRINTS" id="PR00932">
    <property type="entry name" value="AMINO1PTASE"/>
</dbReference>
<dbReference type="SUPFAM" id="SSF101821">
    <property type="entry name" value="Aminopeptidase/glucanase lid domain"/>
    <property type="match status" value="1"/>
</dbReference>
<dbReference type="SUPFAM" id="SSF53187">
    <property type="entry name" value="Zn-dependent exopeptidases"/>
    <property type="match status" value="1"/>
</dbReference>
<organism>
    <name type="scientific">Stutzerimonas stutzeri (strain A1501)</name>
    <name type="common">Pseudomonas stutzeri</name>
    <dbReference type="NCBI Taxonomy" id="379731"/>
    <lineage>
        <taxon>Bacteria</taxon>
        <taxon>Pseudomonadati</taxon>
        <taxon>Pseudomonadota</taxon>
        <taxon>Gammaproteobacteria</taxon>
        <taxon>Pseudomonadales</taxon>
        <taxon>Pseudomonadaceae</taxon>
        <taxon>Stutzerimonas</taxon>
    </lineage>
</organism>
<keyword id="KW-0031">Aminopeptidase</keyword>
<keyword id="KW-0378">Hydrolase</keyword>
<keyword id="KW-0479">Metal-binding</keyword>
<keyword id="KW-0482">Metalloprotease</keyword>
<keyword id="KW-0645">Protease</keyword>
<keyword id="KW-1185">Reference proteome</keyword>
<keyword id="KW-0862">Zinc</keyword>
<feature type="chain" id="PRO_1000013708" description="Probable M18 family aminopeptidase 2">
    <location>
        <begin position="1"/>
        <end position="429"/>
    </location>
</feature>
<feature type="binding site" evidence="1">
    <location>
        <position position="82"/>
    </location>
    <ligand>
        <name>Zn(2+)</name>
        <dbReference type="ChEBI" id="CHEBI:29105"/>
    </ligand>
</feature>
<feature type="binding site" evidence="1">
    <location>
        <position position="156"/>
    </location>
    <ligand>
        <name>Zn(2+)</name>
        <dbReference type="ChEBI" id="CHEBI:29105"/>
    </ligand>
</feature>
<feature type="binding site" evidence="1">
    <location>
        <position position="401"/>
    </location>
    <ligand>
        <name>Zn(2+)</name>
        <dbReference type="ChEBI" id="CHEBI:29105"/>
    </ligand>
</feature>
<name>APEB_STUS1</name>